<organism>
    <name type="scientific">Yersinia pestis</name>
    <dbReference type="NCBI Taxonomy" id="632"/>
    <lineage>
        <taxon>Bacteria</taxon>
        <taxon>Pseudomonadati</taxon>
        <taxon>Pseudomonadota</taxon>
        <taxon>Gammaproteobacteria</taxon>
        <taxon>Enterobacterales</taxon>
        <taxon>Yersiniaceae</taxon>
        <taxon>Yersinia</taxon>
    </lineage>
</organism>
<proteinExistence type="inferred from homology"/>
<feature type="chain" id="PRO_0000157066" description="Thiamine-phosphate synthase">
    <location>
        <begin position="1"/>
        <end position="215"/>
    </location>
</feature>
<feature type="binding site" evidence="1">
    <location>
        <begin position="37"/>
        <end position="41"/>
    </location>
    <ligand>
        <name>4-amino-2-methyl-5-(diphosphooxymethyl)pyrimidine</name>
        <dbReference type="ChEBI" id="CHEBI:57841"/>
    </ligand>
</feature>
<feature type="binding site" evidence="1">
    <location>
        <position position="69"/>
    </location>
    <ligand>
        <name>4-amino-2-methyl-5-(diphosphooxymethyl)pyrimidine</name>
        <dbReference type="ChEBI" id="CHEBI:57841"/>
    </ligand>
</feature>
<feature type="binding site" evidence="1">
    <location>
        <position position="70"/>
    </location>
    <ligand>
        <name>Mg(2+)</name>
        <dbReference type="ChEBI" id="CHEBI:18420"/>
    </ligand>
</feature>
<feature type="binding site" evidence="1">
    <location>
        <position position="89"/>
    </location>
    <ligand>
        <name>Mg(2+)</name>
        <dbReference type="ChEBI" id="CHEBI:18420"/>
    </ligand>
</feature>
<feature type="binding site" evidence="1">
    <location>
        <position position="108"/>
    </location>
    <ligand>
        <name>4-amino-2-methyl-5-(diphosphooxymethyl)pyrimidine</name>
        <dbReference type="ChEBI" id="CHEBI:57841"/>
    </ligand>
</feature>
<feature type="binding site" evidence="1">
    <location>
        <begin position="134"/>
        <end position="136"/>
    </location>
    <ligand>
        <name>2-[(2R,5Z)-2-carboxy-4-methylthiazol-5(2H)-ylidene]ethyl phosphate</name>
        <dbReference type="ChEBI" id="CHEBI:62899"/>
    </ligand>
</feature>
<feature type="binding site" evidence="1">
    <location>
        <position position="137"/>
    </location>
    <ligand>
        <name>4-amino-2-methyl-5-(diphosphooxymethyl)pyrimidine</name>
        <dbReference type="ChEBI" id="CHEBI:57841"/>
    </ligand>
</feature>
<feature type="binding site" evidence="1">
    <location>
        <position position="166"/>
    </location>
    <ligand>
        <name>2-[(2R,5Z)-2-carboxy-4-methylthiazol-5(2H)-ylidene]ethyl phosphate</name>
        <dbReference type="ChEBI" id="CHEBI:62899"/>
    </ligand>
</feature>
<feature type="binding site" evidence="1">
    <location>
        <begin position="186"/>
        <end position="187"/>
    </location>
    <ligand>
        <name>2-[(2R,5Z)-2-carboxy-4-methylthiazol-5(2H)-ylidene]ethyl phosphate</name>
        <dbReference type="ChEBI" id="CHEBI:62899"/>
    </ligand>
</feature>
<dbReference type="EC" id="2.5.1.3" evidence="1"/>
<dbReference type="EMBL" id="AL590842">
    <property type="protein sequence ID" value="CAL22327.1"/>
    <property type="molecule type" value="Genomic_DNA"/>
</dbReference>
<dbReference type="EMBL" id="AE009952">
    <property type="protein sequence ID" value="AAM84079.1"/>
    <property type="status" value="ALT_INIT"/>
    <property type="molecule type" value="Genomic_DNA"/>
</dbReference>
<dbReference type="EMBL" id="AE017042">
    <property type="protein sequence ID" value="AAS63273.1"/>
    <property type="status" value="ALT_INIT"/>
    <property type="molecule type" value="Genomic_DNA"/>
</dbReference>
<dbReference type="PIR" id="AD0455">
    <property type="entry name" value="AD0455"/>
</dbReference>
<dbReference type="RefSeq" id="YP_002348620.1">
    <property type="nucleotide sequence ID" value="NC_003143.1"/>
</dbReference>
<dbReference type="SMR" id="Q8ZAQ1"/>
<dbReference type="IntAct" id="Q8ZAQ1">
    <property type="interactions" value="1"/>
</dbReference>
<dbReference type="STRING" id="214092.YPO3740"/>
<dbReference type="PaxDb" id="214092-YPO3740"/>
<dbReference type="DNASU" id="1145437"/>
<dbReference type="EnsemblBacteria" id="AAS63273">
    <property type="protein sequence ID" value="AAS63273"/>
    <property type="gene ID" value="YP_3103"/>
</dbReference>
<dbReference type="KEGG" id="ype:YPO3740"/>
<dbReference type="KEGG" id="ypk:y0490"/>
<dbReference type="KEGG" id="ypm:YP_3103"/>
<dbReference type="PATRIC" id="fig|214092.21.peg.4257"/>
<dbReference type="eggNOG" id="COG0352">
    <property type="taxonomic scope" value="Bacteria"/>
</dbReference>
<dbReference type="HOGENOM" id="CLU_018272_3_3_6"/>
<dbReference type="OrthoDB" id="9810880at2"/>
<dbReference type="UniPathway" id="UPA00060">
    <property type="reaction ID" value="UER00141"/>
</dbReference>
<dbReference type="Proteomes" id="UP000000815">
    <property type="component" value="Chromosome"/>
</dbReference>
<dbReference type="Proteomes" id="UP000001019">
    <property type="component" value="Chromosome"/>
</dbReference>
<dbReference type="Proteomes" id="UP000002490">
    <property type="component" value="Chromosome"/>
</dbReference>
<dbReference type="GO" id="GO:0005737">
    <property type="term" value="C:cytoplasm"/>
    <property type="evidence" value="ECO:0000318"/>
    <property type="project" value="GO_Central"/>
</dbReference>
<dbReference type="GO" id="GO:0000287">
    <property type="term" value="F:magnesium ion binding"/>
    <property type="evidence" value="ECO:0007669"/>
    <property type="project" value="UniProtKB-UniRule"/>
</dbReference>
<dbReference type="GO" id="GO:0004789">
    <property type="term" value="F:thiamine-phosphate diphosphorylase activity"/>
    <property type="evidence" value="ECO:0000318"/>
    <property type="project" value="GO_Central"/>
</dbReference>
<dbReference type="GO" id="GO:0009228">
    <property type="term" value="P:thiamine biosynthetic process"/>
    <property type="evidence" value="ECO:0000318"/>
    <property type="project" value="GO_Central"/>
</dbReference>
<dbReference type="GO" id="GO:0009229">
    <property type="term" value="P:thiamine diphosphate biosynthetic process"/>
    <property type="evidence" value="ECO:0007669"/>
    <property type="project" value="UniProtKB-UniRule"/>
</dbReference>
<dbReference type="CDD" id="cd00564">
    <property type="entry name" value="TMP_TenI"/>
    <property type="match status" value="1"/>
</dbReference>
<dbReference type="FunFam" id="3.20.20.70:FF:000064">
    <property type="entry name" value="Thiamine-phosphate synthase"/>
    <property type="match status" value="1"/>
</dbReference>
<dbReference type="Gene3D" id="3.20.20.70">
    <property type="entry name" value="Aldolase class I"/>
    <property type="match status" value="1"/>
</dbReference>
<dbReference type="HAMAP" id="MF_00097">
    <property type="entry name" value="TMP_synthase"/>
    <property type="match status" value="1"/>
</dbReference>
<dbReference type="InterPro" id="IPR013785">
    <property type="entry name" value="Aldolase_TIM"/>
</dbReference>
<dbReference type="InterPro" id="IPR036206">
    <property type="entry name" value="ThiamineP_synth_sf"/>
</dbReference>
<dbReference type="InterPro" id="IPR022998">
    <property type="entry name" value="ThiamineP_synth_TenI"/>
</dbReference>
<dbReference type="InterPro" id="IPR034291">
    <property type="entry name" value="TMP_synthase"/>
</dbReference>
<dbReference type="NCBIfam" id="NF002904">
    <property type="entry name" value="PRK03512.1"/>
    <property type="match status" value="1"/>
</dbReference>
<dbReference type="NCBIfam" id="TIGR00693">
    <property type="entry name" value="thiE"/>
    <property type="match status" value="1"/>
</dbReference>
<dbReference type="PANTHER" id="PTHR20857">
    <property type="entry name" value="THIAMINE-PHOSPHATE PYROPHOSPHORYLASE"/>
    <property type="match status" value="1"/>
</dbReference>
<dbReference type="PANTHER" id="PTHR20857:SF15">
    <property type="entry name" value="THIAMINE-PHOSPHATE SYNTHASE"/>
    <property type="match status" value="1"/>
</dbReference>
<dbReference type="Pfam" id="PF02581">
    <property type="entry name" value="TMP-TENI"/>
    <property type="match status" value="1"/>
</dbReference>
<dbReference type="SUPFAM" id="SSF51391">
    <property type="entry name" value="Thiamin phosphate synthase"/>
    <property type="match status" value="1"/>
</dbReference>
<comment type="function">
    <text evidence="1">Condenses 4-methyl-5-(beta-hydroxyethyl)thiazole monophosphate (THZ-P) and 2-methyl-4-amino-5-hydroxymethyl pyrimidine pyrophosphate (HMP-PP) to form thiamine monophosphate (TMP).</text>
</comment>
<comment type="catalytic activity">
    <reaction evidence="1">
        <text>2-[(2R,5Z)-2-carboxy-4-methylthiazol-5(2H)-ylidene]ethyl phosphate + 4-amino-2-methyl-5-(diphosphooxymethyl)pyrimidine + 2 H(+) = thiamine phosphate + CO2 + diphosphate</text>
        <dbReference type="Rhea" id="RHEA:47844"/>
        <dbReference type="ChEBI" id="CHEBI:15378"/>
        <dbReference type="ChEBI" id="CHEBI:16526"/>
        <dbReference type="ChEBI" id="CHEBI:33019"/>
        <dbReference type="ChEBI" id="CHEBI:37575"/>
        <dbReference type="ChEBI" id="CHEBI:57841"/>
        <dbReference type="ChEBI" id="CHEBI:62899"/>
        <dbReference type="EC" id="2.5.1.3"/>
    </reaction>
</comment>
<comment type="catalytic activity">
    <reaction evidence="1">
        <text>2-(2-carboxy-4-methylthiazol-5-yl)ethyl phosphate + 4-amino-2-methyl-5-(diphosphooxymethyl)pyrimidine + 2 H(+) = thiamine phosphate + CO2 + diphosphate</text>
        <dbReference type="Rhea" id="RHEA:47848"/>
        <dbReference type="ChEBI" id="CHEBI:15378"/>
        <dbReference type="ChEBI" id="CHEBI:16526"/>
        <dbReference type="ChEBI" id="CHEBI:33019"/>
        <dbReference type="ChEBI" id="CHEBI:37575"/>
        <dbReference type="ChEBI" id="CHEBI:57841"/>
        <dbReference type="ChEBI" id="CHEBI:62890"/>
        <dbReference type="EC" id="2.5.1.3"/>
    </reaction>
</comment>
<comment type="catalytic activity">
    <reaction evidence="1">
        <text>4-methyl-5-(2-phosphooxyethyl)-thiazole + 4-amino-2-methyl-5-(diphosphooxymethyl)pyrimidine + H(+) = thiamine phosphate + diphosphate</text>
        <dbReference type="Rhea" id="RHEA:22328"/>
        <dbReference type="ChEBI" id="CHEBI:15378"/>
        <dbReference type="ChEBI" id="CHEBI:33019"/>
        <dbReference type="ChEBI" id="CHEBI:37575"/>
        <dbReference type="ChEBI" id="CHEBI:57841"/>
        <dbReference type="ChEBI" id="CHEBI:58296"/>
        <dbReference type="EC" id="2.5.1.3"/>
    </reaction>
</comment>
<comment type="cofactor">
    <cofactor evidence="1">
        <name>Mg(2+)</name>
        <dbReference type="ChEBI" id="CHEBI:18420"/>
    </cofactor>
    <text evidence="1">Binds 1 Mg(2+) ion per subunit.</text>
</comment>
<comment type="pathway">
    <text evidence="1">Cofactor biosynthesis; thiamine diphosphate biosynthesis; thiamine phosphate from 4-amino-2-methyl-5-diphosphomethylpyrimidine and 4-methyl-5-(2-phosphoethyl)-thiazole: step 1/1.</text>
</comment>
<comment type="similarity">
    <text evidence="1">Belongs to the thiamine-phosphate synthase family.</text>
</comment>
<comment type="sequence caution" evidence="2">
    <conflict type="erroneous initiation">
        <sequence resource="EMBL-CDS" id="AAM84079"/>
    </conflict>
</comment>
<comment type="sequence caution" evidence="2">
    <conflict type="erroneous initiation">
        <sequence resource="EMBL-CDS" id="AAS63273"/>
    </conflict>
</comment>
<name>THIE_YERPE</name>
<evidence type="ECO:0000255" key="1">
    <source>
        <dbReference type="HAMAP-Rule" id="MF_00097"/>
    </source>
</evidence>
<evidence type="ECO:0000305" key="2"/>
<reference key="1">
    <citation type="journal article" date="2001" name="Nature">
        <title>Genome sequence of Yersinia pestis, the causative agent of plague.</title>
        <authorList>
            <person name="Parkhill J."/>
            <person name="Wren B.W."/>
            <person name="Thomson N.R."/>
            <person name="Titball R.W."/>
            <person name="Holden M.T.G."/>
            <person name="Prentice M.B."/>
            <person name="Sebaihia M."/>
            <person name="James K.D."/>
            <person name="Churcher C.M."/>
            <person name="Mungall K.L."/>
            <person name="Baker S."/>
            <person name="Basham D."/>
            <person name="Bentley S.D."/>
            <person name="Brooks K."/>
            <person name="Cerdeno-Tarraga A.-M."/>
            <person name="Chillingworth T."/>
            <person name="Cronin A."/>
            <person name="Davies R.M."/>
            <person name="Davis P."/>
            <person name="Dougan G."/>
            <person name="Feltwell T."/>
            <person name="Hamlin N."/>
            <person name="Holroyd S."/>
            <person name="Jagels K."/>
            <person name="Karlyshev A.V."/>
            <person name="Leather S."/>
            <person name="Moule S."/>
            <person name="Oyston P.C.F."/>
            <person name="Quail M.A."/>
            <person name="Rutherford K.M."/>
            <person name="Simmonds M."/>
            <person name="Skelton J."/>
            <person name="Stevens K."/>
            <person name="Whitehead S."/>
            <person name="Barrell B.G."/>
        </authorList>
    </citation>
    <scope>NUCLEOTIDE SEQUENCE [LARGE SCALE GENOMIC DNA]</scope>
    <source>
        <strain>CO-92 / Biovar Orientalis</strain>
    </source>
</reference>
<reference key="2">
    <citation type="journal article" date="2002" name="J. Bacteriol.">
        <title>Genome sequence of Yersinia pestis KIM.</title>
        <authorList>
            <person name="Deng W."/>
            <person name="Burland V."/>
            <person name="Plunkett G. III"/>
            <person name="Boutin A."/>
            <person name="Mayhew G.F."/>
            <person name="Liss P."/>
            <person name="Perna N.T."/>
            <person name="Rose D.J."/>
            <person name="Mau B."/>
            <person name="Zhou S."/>
            <person name="Schwartz D.C."/>
            <person name="Fetherston J.D."/>
            <person name="Lindler L.E."/>
            <person name="Brubaker R.R."/>
            <person name="Plano G.V."/>
            <person name="Straley S.C."/>
            <person name="McDonough K.A."/>
            <person name="Nilles M.L."/>
            <person name="Matson J.S."/>
            <person name="Blattner F.R."/>
            <person name="Perry R.D."/>
        </authorList>
    </citation>
    <scope>NUCLEOTIDE SEQUENCE [LARGE SCALE GENOMIC DNA]</scope>
    <source>
        <strain>KIM10+ / Biovar Mediaevalis</strain>
    </source>
</reference>
<reference key="3">
    <citation type="journal article" date="2004" name="DNA Res.">
        <title>Complete genome sequence of Yersinia pestis strain 91001, an isolate avirulent to humans.</title>
        <authorList>
            <person name="Song Y."/>
            <person name="Tong Z."/>
            <person name="Wang J."/>
            <person name="Wang L."/>
            <person name="Guo Z."/>
            <person name="Han Y."/>
            <person name="Zhang J."/>
            <person name="Pei D."/>
            <person name="Zhou D."/>
            <person name="Qin H."/>
            <person name="Pang X."/>
            <person name="Han Y."/>
            <person name="Zhai J."/>
            <person name="Li M."/>
            <person name="Cui B."/>
            <person name="Qi Z."/>
            <person name="Jin L."/>
            <person name="Dai R."/>
            <person name="Chen F."/>
            <person name="Li S."/>
            <person name="Ye C."/>
            <person name="Du Z."/>
            <person name="Lin W."/>
            <person name="Wang J."/>
            <person name="Yu J."/>
            <person name="Yang H."/>
            <person name="Wang J."/>
            <person name="Huang P."/>
            <person name="Yang R."/>
        </authorList>
    </citation>
    <scope>NUCLEOTIDE SEQUENCE [LARGE SCALE GENOMIC DNA]</scope>
    <source>
        <strain>91001 / Biovar Mediaevalis</strain>
    </source>
</reference>
<keyword id="KW-0460">Magnesium</keyword>
<keyword id="KW-0479">Metal-binding</keyword>
<keyword id="KW-1185">Reference proteome</keyword>
<keyword id="KW-0784">Thiamine biosynthesis</keyword>
<keyword id="KW-0808">Transferase</keyword>
<protein>
    <recommendedName>
        <fullName evidence="1">Thiamine-phosphate synthase</fullName>
        <shortName evidence="1">TP synthase</shortName>
        <shortName evidence="1">TPS</shortName>
        <ecNumber evidence="1">2.5.1.3</ecNumber>
    </recommendedName>
    <alternativeName>
        <fullName evidence="1">Thiamine-phosphate pyrophosphorylase</fullName>
        <shortName evidence="1">TMP pyrophosphorylase</shortName>
        <shortName evidence="1">TMP-PPase</shortName>
    </alternativeName>
</protein>
<sequence>MATPGFPSTEQRLGLYPVVDSLLWIERLLAAGVTTLQLRIKNADDAQVEQDIVAAIELGKRYQARLFINDYWQLAVKHGAYGVHLGQEDLEAADLAAIQQAGLRLGISTHDEHELAVAKTLRPSYIALGHIFPTQTKQMPSSPQGLASLSRQVKNTPDYPTVAIGGISIERVPHVLATGVGSVAVVSAITLASDWQRATAQLLHLIEGKELADEK</sequence>
<accession>Q8ZAQ1</accession>
<accession>Q0WAR8</accession>
<gene>
    <name evidence="1" type="primary">thiE</name>
    <name type="ordered locus">YPO3740</name>
    <name type="ordered locus">y0490</name>
    <name type="ordered locus">YP_3103</name>
</gene>